<accession>Q17QA0</accession>
<comment type="function">
    <text evidence="2">The SMN complex catalyzes the assembly of small nuclear ribonucleoproteins (snRNPs), the building blocks of the spliceosome, and thereby plays an important role in the splicing of cellular pre-mRNAs. Most spliceosomal snRNPs contain a common set of Sm proteins SNRPB, SNRPD1, SNRPD2, SNRPD3, SNRPE, SNRPF and SNRPG that assemble in a heptameric protein ring on the Sm site of the small nuclear RNA to form the core snRNP (Sm core). In the cytosol, the Sm proteins SNRPD1, SNRPD2, SNRPE, SNRPF and SNRPG are trapped in an inactive 6S pICln-Sm complex by the chaperone CLNS1A that controls the assembly of the core snRNP. To assemble core snRNPs, the SMN complex accepts the trapped 5Sm proteins from CLNS1A forming an intermediate. Binding of snRNA inside 5Sm triggers eviction of the SMN complex, thereby allowing binding of SNRPD3 and SNRPB to complete assembly of the core snRNP (By similarity).</text>
</comment>
<comment type="subunit">
    <text evidence="2">Part of the core SMN complex that contains SMN1, GEMIN2/SIP1, DDX20/GEMIN3, GEMIN4, GEMIN5, GEMIN6, GEMIN7, GEMIN8 and STRAP/UNRIP (By similarity). Part of the SMN-Sm complex that contains SMN1, GEMIN2/SIP1, DDX20/GEMIN3, GEMIN4, GEMIN5, GEMIN6, GEMIN7, GEMIN8, STRAP/UNRIP and the Sm proteins SNRPB, SNRPD1, SNRPD2, SNRPD3, SNRPE, SNRPF and SNRPG (By similarity). Interacts with GEMIN6; the interaction is direct (By similarity). Interacts with STRAP/UNRIP; the interaction is direct (By similarity). Interacts with GEMIN8; the interaction is direct (By similarity). Interacts with SNRPB, SNRPD2, SNRPD3 and SNRPE; the interaction is direct (By similarity).</text>
</comment>
<comment type="subcellular location">
    <subcellularLocation>
        <location evidence="2">Nucleus</location>
        <location evidence="2">Nucleoplasm</location>
    </subcellularLocation>
    <subcellularLocation>
        <location evidence="2">Nucleus</location>
        <location evidence="2">Gem</location>
    </subcellularLocation>
    <subcellularLocation>
        <location evidence="2">Cytoplasm</location>
    </subcellularLocation>
    <text evidence="1">Found both in the nucleoplasm and in nuclear bodies called gems (Gemini of Cajal bodies) that are often in proximity to Cajal (coiled) bodies. Also found in the cytoplasm (By similarity).</text>
</comment>
<comment type="similarity">
    <text evidence="6">Belongs to the gemin-7 family.</text>
</comment>
<dbReference type="EMBL" id="BC118472">
    <property type="protein sequence ID" value="AAI18473.1"/>
    <property type="molecule type" value="mRNA"/>
</dbReference>
<dbReference type="RefSeq" id="NP_001069957.1">
    <property type="nucleotide sequence ID" value="NM_001076489.1"/>
</dbReference>
<dbReference type="SMR" id="Q17QA0"/>
<dbReference type="FunCoup" id="Q17QA0">
    <property type="interactions" value="746"/>
</dbReference>
<dbReference type="STRING" id="9913.ENSBTAP00000014112"/>
<dbReference type="PaxDb" id="9913-ENSBTAP00000014112"/>
<dbReference type="Ensembl" id="ENSBTAT00000095759.1">
    <property type="protein sequence ID" value="ENSBTAP00000080739.1"/>
    <property type="gene ID" value="ENSBTAG00000010668.5"/>
</dbReference>
<dbReference type="Ensembl" id="ENSBTAT00000111810.1">
    <property type="protein sequence ID" value="ENSBTAP00000090226.1"/>
    <property type="gene ID" value="ENSBTAG00000010668.5"/>
</dbReference>
<dbReference type="GeneID" id="618024"/>
<dbReference type="KEGG" id="bta:618024"/>
<dbReference type="CTD" id="79760"/>
<dbReference type="VEuPathDB" id="HostDB:ENSBTAG00000010668"/>
<dbReference type="VGNC" id="VGNC:29320">
    <property type="gene designation" value="GEMIN7"/>
</dbReference>
<dbReference type="eggNOG" id="ENOG502S59N">
    <property type="taxonomic scope" value="Eukaryota"/>
</dbReference>
<dbReference type="GeneTree" id="ENSGT00390000018039"/>
<dbReference type="HOGENOM" id="CLU_2031900_0_0_1"/>
<dbReference type="InParanoid" id="Q17QA0"/>
<dbReference type="OMA" id="CADIISY"/>
<dbReference type="OrthoDB" id="70763at2759"/>
<dbReference type="TreeFam" id="TF328578"/>
<dbReference type="Reactome" id="R-BTA-191859">
    <property type="pathway name" value="snRNP Assembly"/>
</dbReference>
<dbReference type="Proteomes" id="UP000009136">
    <property type="component" value="Chromosome 18"/>
</dbReference>
<dbReference type="Bgee" id="ENSBTAG00000010668">
    <property type="expression patterns" value="Expressed in blood and 108 other cell types or tissues"/>
</dbReference>
<dbReference type="GO" id="GO:0005829">
    <property type="term" value="C:cytosol"/>
    <property type="evidence" value="ECO:0000250"/>
    <property type="project" value="UniProtKB"/>
</dbReference>
<dbReference type="GO" id="GO:0097504">
    <property type="term" value="C:Gemini of Cajal bodies"/>
    <property type="evidence" value="ECO:0000250"/>
    <property type="project" value="UniProtKB"/>
</dbReference>
<dbReference type="GO" id="GO:0120114">
    <property type="term" value="C:Sm-like protein family complex"/>
    <property type="evidence" value="ECO:0000318"/>
    <property type="project" value="GO_Central"/>
</dbReference>
<dbReference type="GO" id="GO:0032797">
    <property type="term" value="C:SMN complex"/>
    <property type="evidence" value="ECO:0000250"/>
    <property type="project" value="UniProtKB"/>
</dbReference>
<dbReference type="GO" id="GO:0034719">
    <property type="term" value="C:SMN-Sm protein complex"/>
    <property type="evidence" value="ECO:0000250"/>
    <property type="project" value="UniProtKB"/>
</dbReference>
<dbReference type="GO" id="GO:0003723">
    <property type="term" value="F:RNA binding"/>
    <property type="evidence" value="ECO:0007669"/>
    <property type="project" value="InterPro"/>
</dbReference>
<dbReference type="GO" id="GO:0000387">
    <property type="term" value="P:spliceosomal snRNP assembly"/>
    <property type="evidence" value="ECO:0000250"/>
    <property type="project" value="UniProtKB"/>
</dbReference>
<dbReference type="CDD" id="cd11677">
    <property type="entry name" value="Gemin7"/>
    <property type="match status" value="1"/>
</dbReference>
<dbReference type="FunFam" id="2.30.30.100:FF:000040">
    <property type="entry name" value="Gem-associated protein 7"/>
    <property type="match status" value="1"/>
</dbReference>
<dbReference type="Gene3D" id="2.30.30.100">
    <property type="match status" value="1"/>
</dbReference>
<dbReference type="InterPro" id="IPR047575">
    <property type="entry name" value="Sm"/>
</dbReference>
<dbReference type="InterPro" id="IPR020338">
    <property type="entry name" value="SMN_gemin7"/>
</dbReference>
<dbReference type="InterPro" id="IPR024642">
    <property type="entry name" value="SUZ-C"/>
</dbReference>
<dbReference type="PANTHER" id="PTHR14679">
    <property type="entry name" value="GEM-ASSOCIATED PROTEIN 7"/>
    <property type="match status" value="1"/>
</dbReference>
<dbReference type="PANTHER" id="PTHR14679:SF1">
    <property type="entry name" value="GEM-ASSOCIATED PROTEIN 7"/>
    <property type="match status" value="1"/>
</dbReference>
<dbReference type="Pfam" id="PF11095">
    <property type="entry name" value="Gemin7"/>
    <property type="match status" value="1"/>
</dbReference>
<dbReference type="PROSITE" id="PS52002">
    <property type="entry name" value="SM"/>
    <property type="match status" value="1"/>
</dbReference>
<dbReference type="PROSITE" id="PS51938">
    <property type="entry name" value="SUZ_C"/>
    <property type="match status" value="1"/>
</dbReference>
<protein>
    <recommendedName>
        <fullName>Gem-associated protein 7</fullName>
        <shortName>Gemin-7</shortName>
    </recommendedName>
</protein>
<sequence>MQTPLATPVPVLRLPRGPDGSNRGFAPDGRRAPPKPEVPEPPESRESWEQQARASLRERYLRSLLAMVGRPVCFTLHEGVQVIAHFGATDLDVANFYVSQLQTPIGIQAEALLRCSDIISYTFKP</sequence>
<proteinExistence type="evidence at transcript level"/>
<feature type="chain" id="PRO_0000271401" description="Gem-associated protein 7">
    <location>
        <begin position="1"/>
        <end position="125"/>
    </location>
</feature>
<feature type="domain" description="SUZ-C" evidence="3">
    <location>
        <begin position="1"/>
        <end position="29"/>
    </location>
</feature>
<feature type="domain" description="Sm" evidence="4">
    <location>
        <begin position="59"/>
        <end position="125"/>
    </location>
</feature>
<feature type="region of interest" description="Disordered" evidence="5">
    <location>
        <begin position="1"/>
        <end position="52"/>
    </location>
</feature>
<feature type="modified residue" description="N-acetylmethionine" evidence="2">
    <location>
        <position position="1"/>
    </location>
</feature>
<feature type="modified residue" description="Phosphothreonine" evidence="2">
    <location>
        <position position="3"/>
    </location>
</feature>
<organism>
    <name type="scientific">Bos taurus</name>
    <name type="common">Bovine</name>
    <dbReference type="NCBI Taxonomy" id="9913"/>
    <lineage>
        <taxon>Eukaryota</taxon>
        <taxon>Metazoa</taxon>
        <taxon>Chordata</taxon>
        <taxon>Craniata</taxon>
        <taxon>Vertebrata</taxon>
        <taxon>Euteleostomi</taxon>
        <taxon>Mammalia</taxon>
        <taxon>Eutheria</taxon>
        <taxon>Laurasiatheria</taxon>
        <taxon>Artiodactyla</taxon>
        <taxon>Ruminantia</taxon>
        <taxon>Pecora</taxon>
        <taxon>Bovidae</taxon>
        <taxon>Bovinae</taxon>
        <taxon>Bos</taxon>
    </lineage>
</organism>
<keyword id="KW-0007">Acetylation</keyword>
<keyword id="KW-0963">Cytoplasm</keyword>
<keyword id="KW-0507">mRNA processing</keyword>
<keyword id="KW-0508">mRNA splicing</keyword>
<keyword id="KW-0539">Nucleus</keyword>
<keyword id="KW-0597">Phosphoprotein</keyword>
<keyword id="KW-1185">Reference proteome</keyword>
<reference key="1">
    <citation type="submission" date="2006-06" db="EMBL/GenBank/DDBJ databases">
        <authorList>
            <consortium name="NIH - Mammalian Gene Collection (MGC) project"/>
        </authorList>
    </citation>
    <scope>NUCLEOTIDE SEQUENCE [LARGE SCALE MRNA]</scope>
    <source>
        <strain>Hereford</strain>
        <tissue>Fetal brain</tissue>
    </source>
</reference>
<name>GEMI7_BOVIN</name>
<gene>
    <name type="primary">GEMIN7</name>
</gene>
<evidence type="ECO:0000250" key="1"/>
<evidence type="ECO:0000250" key="2">
    <source>
        <dbReference type="UniProtKB" id="Q9H840"/>
    </source>
</evidence>
<evidence type="ECO:0000255" key="3">
    <source>
        <dbReference type="PROSITE-ProRule" id="PRU01287"/>
    </source>
</evidence>
<evidence type="ECO:0000255" key="4">
    <source>
        <dbReference type="PROSITE-ProRule" id="PRU01346"/>
    </source>
</evidence>
<evidence type="ECO:0000256" key="5">
    <source>
        <dbReference type="SAM" id="MobiDB-lite"/>
    </source>
</evidence>
<evidence type="ECO:0000305" key="6"/>